<evidence type="ECO:0000255" key="1">
    <source>
        <dbReference type="HAMAP-Rule" id="MF_00740"/>
    </source>
</evidence>
<keyword id="KW-0963">Cytoplasm</keyword>
<keyword id="KW-0413">Isomerase</keyword>
<keyword id="KW-0464">Manganese</keyword>
<keyword id="KW-0479">Metal-binding</keyword>
<comment type="function">
    <text evidence="1">Isomerase that catalyzes the conversion of deoxy-ribose 1-phosphate (dRib-1-P) and ribose 1-phosphate (Rib-1-P) to deoxy-ribose 5-phosphate (dRib-5-P) and ribose 5-phosphate (Rib-5-P), respectively.</text>
</comment>
<comment type="catalytic activity">
    <reaction evidence="1">
        <text>2-deoxy-alpha-D-ribose 1-phosphate = 2-deoxy-D-ribose 5-phosphate</text>
        <dbReference type="Rhea" id="RHEA:27658"/>
        <dbReference type="ChEBI" id="CHEBI:57259"/>
        <dbReference type="ChEBI" id="CHEBI:62877"/>
        <dbReference type="EC" id="5.4.2.7"/>
    </reaction>
</comment>
<comment type="catalytic activity">
    <reaction evidence="1">
        <text>alpha-D-ribose 1-phosphate = D-ribose 5-phosphate</text>
        <dbReference type="Rhea" id="RHEA:18793"/>
        <dbReference type="ChEBI" id="CHEBI:57720"/>
        <dbReference type="ChEBI" id="CHEBI:78346"/>
        <dbReference type="EC" id="5.4.2.7"/>
    </reaction>
</comment>
<comment type="cofactor">
    <cofactor evidence="1">
        <name>Mn(2+)</name>
        <dbReference type="ChEBI" id="CHEBI:29035"/>
    </cofactor>
    <text evidence="1">Binds 2 manganese ions.</text>
</comment>
<comment type="pathway">
    <text evidence="1">Carbohydrate degradation; 2-deoxy-D-ribose 1-phosphate degradation; D-glyceraldehyde 3-phosphate and acetaldehyde from 2-deoxy-alpha-D-ribose 1-phosphate: step 1/2.</text>
</comment>
<comment type="subcellular location">
    <subcellularLocation>
        <location evidence="1">Cytoplasm</location>
    </subcellularLocation>
</comment>
<comment type="similarity">
    <text evidence="1">Belongs to the phosphopentomutase family.</text>
</comment>
<accession>A0KU09</accession>
<reference key="1">
    <citation type="submission" date="2006-09" db="EMBL/GenBank/DDBJ databases">
        <title>Complete sequence of chromosome 1 of Shewanella sp. ANA-3.</title>
        <authorList>
            <person name="Copeland A."/>
            <person name="Lucas S."/>
            <person name="Lapidus A."/>
            <person name="Barry K."/>
            <person name="Detter J.C."/>
            <person name="Glavina del Rio T."/>
            <person name="Hammon N."/>
            <person name="Israni S."/>
            <person name="Dalin E."/>
            <person name="Tice H."/>
            <person name="Pitluck S."/>
            <person name="Chertkov O."/>
            <person name="Brettin T."/>
            <person name="Bruce D."/>
            <person name="Han C."/>
            <person name="Tapia R."/>
            <person name="Gilna P."/>
            <person name="Schmutz J."/>
            <person name="Larimer F."/>
            <person name="Land M."/>
            <person name="Hauser L."/>
            <person name="Kyrpides N."/>
            <person name="Kim E."/>
            <person name="Newman D."/>
            <person name="Salticov C."/>
            <person name="Konstantinidis K."/>
            <person name="Klappenback J."/>
            <person name="Tiedje J."/>
            <person name="Richardson P."/>
        </authorList>
    </citation>
    <scope>NUCLEOTIDE SEQUENCE [LARGE SCALE GENOMIC DNA]</scope>
    <source>
        <strain>ANA-3</strain>
    </source>
</reference>
<proteinExistence type="inferred from homology"/>
<gene>
    <name evidence="1" type="primary">deoB</name>
    <name type="ordered locus">Shewana3_1043</name>
</gene>
<feature type="chain" id="PRO_1000046400" description="Phosphopentomutase">
    <location>
        <begin position="1"/>
        <end position="404"/>
    </location>
</feature>
<feature type="binding site" evidence="1">
    <location>
        <position position="10"/>
    </location>
    <ligand>
        <name>Mn(2+)</name>
        <dbReference type="ChEBI" id="CHEBI:29035"/>
        <label>1</label>
    </ligand>
</feature>
<feature type="binding site" evidence="1">
    <location>
        <position position="303"/>
    </location>
    <ligand>
        <name>Mn(2+)</name>
        <dbReference type="ChEBI" id="CHEBI:29035"/>
        <label>2</label>
    </ligand>
</feature>
<feature type="binding site" evidence="1">
    <location>
        <position position="308"/>
    </location>
    <ligand>
        <name>Mn(2+)</name>
        <dbReference type="ChEBI" id="CHEBI:29035"/>
        <label>2</label>
    </ligand>
</feature>
<feature type="binding site" evidence="1">
    <location>
        <position position="344"/>
    </location>
    <ligand>
        <name>Mn(2+)</name>
        <dbReference type="ChEBI" id="CHEBI:29035"/>
        <label>1</label>
    </ligand>
</feature>
<feature type="binding site" evidence="1">
    <location>
        <position position="345"/>
    </location>
    <ligand>
        <name>Mn(2+)</name>
        <dbReference type="ChEBI" id="CHEBI:29035"/>
        <label>1</label>
    </ligand>
</feature>
<feature type="binding site" evidence="1">
    <location>
        <position position="356"/>
    </location>
    <ligand>
        <name>Mn(2+)</name>
        <dbReference type="ChEBI" id="CHEBI:29035"/>
        <label>2</label>
    </ligand>
</feature>
<sequence length="404" mass="43596">MKRTVIMMLDSFGVGAAGDAAKFGDLGSDTFGHIAKACAEGEADIGREGPLTLPNLARLGLAHAAMESTGAFAPGFADNVELIGAYGHAQELSSGKDTPSGHWEMAGVPVLFEWGYFSEHQNSFPKELTDKILARAGLDGFLGNCHASGTTILEELGEEHMRSGKPIFYTSADSVFQIACHEGTFGLENLYRLCEIAREELEPYNIGRVIARPFDGTGPSDFARTGNRKDYSLEPPAKTVLDKLKAAGGEVVSVGKIADIYAYCGITKKVKANGLEALFDATLAEVKSAGENTIVFTNFVDFDSHYGHRRDVAGYAKGLEYFDSRLPEMLALLDEDDLLILTADHGCDPTWQGTDHTREYVPVLAYGAGLKAGSLGRRNSFADIGQSIASYFKLEPMEYGESFI</sequence>
<organism>
    <name type="scientific">Shewanella sp. (strain ANA-3)</name>
    <dbReference type="NCBI Taxonomy" id="94122"/>
    <lineage>
        <taxon>Bacteria</taxon>
        <taxon>Pseudomonadati</taxon>
        <taxon>Pseudomonadota</taxon>
        <taxon>Gammaproteobacteria</taxon>
        <taxon>Alteromonadales</taxon>
        <taxon>Shewanellaceae</taxon>
        <taxon>Shewanella</taxon>
    </lineage>
</organism>
<name>DEOB_SHESA</name>
<protein>
    <recommendedName>
        <fullName evidence="1">Phosphopentomutase</fullName>
        <ecNumber evidence="1">5.4.2.7</ecNumber>
    </recommendedName>
    <alternativeName>
        <fullName evidence="1">Phosphodeoxyribomutase</fullName>
    </alternativeName>
</protein>
<dbReference type="EC" id="5.4.2.7" evidence="1"/>
<dbReference type="EMBL" id="CP000469">
    <property type="protein sequence ID" value="ABK47278.1"/>
    <property type="molecule type" value="Genomic_DNA"/>
</dbReference>
<dbReference type="RefSeq" id="WP_011716154.1">
    <property type="nucleotide sequence ID" value="NC_008577.1"/>
</dbReference>
<dbReference type="SMR" id="A0KU09"/>
<dbReference type="STRING" id="94122.Shewana3_1043"/>
<dbReference type="KEGG" id="shn:Shewana3_1043"/>
<dbReference type="eggNOG" id="COG1015">
    <property type="taxonomic scope" value="Bacteria"/>
</dbReference>
<dbReference type="HOGENOM" id="CLU_053861_0_0_6"/>
<dbReference type="OrthoDB" id="9769930at2"/>
<dbReference type="UniPathway" id="UPA00002">
    <property type="reaction ID" value="UER00467"/>
</dbReference>
<dbReference type="Proteomes" id="UP000002589">
    <property type="component" value="Chromosome"/>
</dbReference>
<dbReference type="GO" id="GO:0005829">
    <property type="term" value="C:cytosol"/>
    <property type="evidence" value="ECO:0007669"/>
    <property type="project" value="TreeGrafter"/>
</dbReference>
<dbReference type="GO" id="GO:0000287">
    <property type="term" value="F:magnesium ion binding"/>
    <property type="evidence" value="ECO:0007669"/>
    <property type="project" value="InterPro"/>
</dbReference>
<dbReference type="GO" id="GO:0030145">
    <property type="term" value="F:manganese ion binding"/>
    <property type="evidence" value="ECO:0007669"/>
    <property type="project" value="UniProtKB-UniRule"/>
</dbReference>
<dbReference type="GO" id="GO:0008973">
    <property type="term" value="F:phosphopentomutase activity"/>
    <property type="evidence" value="ECO:0007669"/>
    <property type="project" value="UniProtKB-UniRule"/>
</dbReference>
<dbReference type="GO" id="GO:0006018">
    <property type="term" value="P:2-deoxyribose 1-phosphate catabolic process"/>
    <property type="evidence" value="ECO:0007669"/>
    <property type="project" value="UniProtKB-UniRule"/>
</dbReference>
<dbReference type="GO" id="GO:0006015">
    <property type="term" value="P:5-phosphoribose 1-diphosphate biosynthetic process"/>
    <property type="evidence" value="ECO:0007669"/>
    <property type="project" value="UniProtKB-UniPathway"/>
</dbReference>
<dbReference type="GO" id="GO:0043094">
    <property type="term" value="P:metabolic compound salvage"/>
    <property type="evidence" value="ECO:0007669"/>
    <property type="project" value="InterPro"/>
</dbReference>
<dbReference type="GO" id="GO:0009117">
    <property type="term" value="P:nucleotide metabolic process"/>
    <property type="evidence" value="ECO:0007669"/>
    <property type="project" value="InterPro"/>
</dbReference>
<dbReference type="CDD" id="cd16009">
    <property type="entry name" value="PPM"/>
    <property type="match status" value="1"/>
</dbReference>
<dbReference type="FunFam" id="3.30.70.1250:FF:000001">
    <property type="entry name" value="Phosphopentomutase"/>
    <property type="match status" value="1"/>
</dbReference>
<dbReference type="Gene3D" id="3.40.720.10">
    <property type="entry name" value="Alkaline Phosphatase, subunit A"/>
    <property type="match status" value="1"/>
</dbReference>
<dbReference type="Gene3D" id="3.30.70.1250">
    <property type="entry name" value="Phosphopentomutase"/>
    <property type="match status" value="1"/>
</dbReference>
<dbReference type="HAMAP" id="MF_00740">
    <property type="entry name" value="Phosphopentomut"/>
    <property type="match status" value="1"/>
</dbReference>
<dbReference type="InterPro" id="IPR017850">
    <property type="entry name" value="Alkaline_phosphatase_core_sf"/>
</dbReference>
<dbReference type="InterPro" id="IPR010045">
    <property type="entry name" value="DeoB"/>
</dbReference>
<dbReference type="InterPro" id="IPR006124">
    <property type="entry name" value="Metalloenzyme"/>
</dbReference>
<dbReference type="InterPro" id="IPR024052">
    <property type="entry name" value="Phosphopentomutase_DeoB_cap_sf"/>
</dbReference>
<dbReference type="NCBIfam" id="TIGR01696">
    <property type="entry name" value="deoB"/>
    <property type="match status" value="1"/>
</dbReference>
<dbReference type="NCBIfam" id="NF003766">
    <property type="entry name" value="PRK05362.1"/>
    <property type="match status" value="1"/>
</dbReference>
<dbReference type="PANTHER" id="PTHR21110">
    <property type="entry name" value="PHOSPHOPENTOMUTASE"/>
    <property type="match status" value="1"/>
</dbReference>
<dbReference type="PANTHER" id="PTHR21110:SF0">
    <property type="entry name" value="PHOSPHOPENTOMUTASE"/>
    <property type="match status" value="1"/>
</dbReference>
<dbReference type="Pfam" id="PF01676">
    <property type="entry name" value="Metalloenzyme"/>
    <property type="match status" value="1"/>
</dbReference>
<dbReference type="PIRSF" id="PIRSF001491">
    <property type="entry name" value="Ppentomutase"/>
    <property type="match status" value="1"/>
</dbReference>
<dbReference type="SUPFAM" id="SSF53649">
    <property type="entry name" value="Alkaline phosphatase-like"/>
    <property type="match status" value="1"/>
</dbReference>
<dbReference type="SUPFAM" id="SSF143856">
    <property type="entry name" value="DeoB insert domain-like"/>
    <property type="match status" value="1"/>
</dbReference>